<accession>P83146</accession>
<dbReference type="EC" id="4.2.2.-"/>
<dbReference type="GO" id="GO:0008201">
    <property type="term" value="F:heparin binding"/>
    <property type="evidence" value="ECO:0000314"/>
    <property type="project" value="UniProtKB"/>
</dbReference>
<dbReference type="GO" id="GO:0016829">
    <property type="term" value="F:lyase activity"/>
    <property type="evidence" value="ECO:0000314"/>
    <property type="project" value="UniProtKB"/>
</dbReference>
<reference evidence="3" key="1">
    <citation type="journal article" date="2001" name="Eur. J. Biochem.">
        <title>Purification and characterization of acharan sulfate lyases, two novel heparinases, from Bacteroides stercoris HJ-15.</title>
        <authorList>
            <person name="Kim B.-T."/>
            <person name="Hong S.-W."/>
            <person name="Kim W.-S."/>
            <person name="Kim Y.S."/>
            <person name="Kim D.-H."/>
        </authorList>
    </citation>
    <scope>PROTEIN SEQUENCE</scope>
    <scope>FUNCTION</scope>
    <scope>ACTIVITY REGULATION</scope>
    <scope>SUBUNIT</scope>
    <source>
        <strain>HJ-15</strain>
    </source>
</reference>
<keyword id="KW-0903">Direct protein sequencing</keyword>
<keyword id="KW-0358">Heparin-binding</keyword>
<keyword id="KW-0456">Lyase</keyword>
<comment type="function">
    <text evidence="1">Degrades acharan sulfate and, to a lesser extent, heparin and heparan sulfate.</text>
</comment>
<comment type="activity regulation">
    <text evidence="1">Inhibited by Cu(2+) ion, nitrogen and cobalt. Activated by reducing agents, such as DL-dithiothreitol and 2-mercaptoethanol.</text>
</comment>
<comment type="biophysicochemical properties">
    <phDependence>
        <text>Optimum pH is 7.2.</text>
    </phDependence>
    <temperatureDependence>
        <text>Optimum temperature 45 degrees Celsius.</text>
    </temperatureDependence>
</comment>
<comment type="subunit">
    <text evidence="1">Monomer.</text>
</comment>
<comment type="PTM">
    <text evidence="1">The N-terminus is blocked.</text>
</comment>
<proteinExistence type="evidence at protein level"/>
<evidence type="ECO:0000269" key="1">
    <source>
    </source>
</evidence>
<evidence type="ECO:0000303" key="2">
    <source>
    </source>
</evidence>
<evidence type="ECO:0000305" key="3"/>
<feature type="chain" id="PRO_0000064700" description="Acharan sulfate lyase 1">
    <location>
        <begin position="1" status="less than"/>
        <end position="11" status="greater than"/>
    </location>
</feature>
<feature type="non-terminal residue" evidence="2">
    <location>
        <position position="1"/>
    </location>
</feature>
<feature type="non-terminal residue" evidence="2">
    <location>
        <position position="11"/>
    </location>
</feature>
<protein>
    <recommendedName>
        <fullName>Acharan sulfate lyase 1</fullName>
        <ecNumber>4.2.2.-</ecNumber>
    </recommendedName>
</protein>
<organism evidence="3">
    <name type="scientific">Bacteroides stercoris</name>
    <dbReference type="NCBI Taxonomy" id="46506"/>
    <lineage>
        <taxon>Bacteria</taxon>
        <taxon>Pseudomonadati</taxon>
        <taxon>Bacteroidota</taxon>
        <taxon>Bacteroidia</taxon>
        <taxon>Bacteroidales</taxon>
        <taxon>Bacteroidaceae</taxon>
        <taxon>Bacteroides</taxon>
    </lineage>
</organism>
<name>ASL1_BACSE</name>
<sequence length="11" mass="1395">NYIYSGHNYHQ</sequence>